<name>ENLYS_BPH19</name>
<organism>
    <name type="scientific">Enterobacteria phage H19B</name>
    <name type="common">Bacteriophage H19B</name>
    <dbReference type="NCBI Taxonomy" id="69932"/>
    <lineage>
        <taxon>Viruses</taxon>
        <taxon>Duplodnaviria</taxon>
        <taxon>Heunggongvirae</taxon>
        <taxon>Uroviricota</taxon>
        <taxon>Caudoviricetes</taxon>
        <taxon>Lambdavirus</taxon>
    </lineage>
</organism>
<accession>Q9ZXB7</accession>
<proteinExistence type="inferred from homology"/>
<sequence length="177" mass="19506">MNAKIRYGLSAAVLALIGAGASAPEILDQFLDEKEGNHTTAYRDGTGIWTICRGAILVDGKPVVPGMKLSKEKCDQVNAIERDKALAWVEKNIKVPLTDPQKAGIASFCPYNIGPGKCFPSTFYRRINAGDRRGACEAIRWWIKDGGRDCRIRSNNCYGQVSRRDQESALACWGIDR</sequence>
<evidence type="ECO:0000255" key="1"/>
<evidence type="ECO:0000255" key="2">
    <source>
        <dbReference type="HAMAP-Rule" id="MF_04136"/>
    </source>
</evidence>
<reference key="1">
    <citation type="journal article" date="1998" name="Gene">
        <title>Arrangement and functional identification of genes in the regulatory region of lambdoid phage H-19B, a carrier of a shiga-like toxin.</title>
        <authorList>
            <person name="Neely M.N."/>
            <person name="Friedman D.I."/>
        </authorList>
    </citation>
    <scope>NUCLEOTIDE SEQUENCE [GENOMIC DNA]</scope>
</reference>
<comment type="function">
    <text evidence="2">Signal-arrest-release (SAR) endolysin with lysozyme activity that degrades host peptidoglycans and participates with the pinholin and spanin proteins in the sequential events which lead to programmed host cell lysis releasing the mature viral particles. Once the pinholin has permeabilized the host cell membrane, the SAR-endolysin is released into the periplasm where it breaks down the peptidoglycan layer.</text>
</comment>
<comment type="catalytic activity">
    <reaction evidence="2">
        <text>Hydrolysis of (1-&gt;4)-beta-linkages between N-acetylmuramic acid and N-acetyl-D-glucosamine residues in a peptidoglycan and between N-acetyl-D-glucosamine residues in chitodextrins.</text>
        <dbReference type="EC" id="3.2.1.17"/>
    </reaction>
</comment>
<comment type="subcellular location">
    <subcellularLocation>
        <location evidence="2">Host cell inner membrane</location>
        <topology evidence="2">Single-pass type II membrane protein</topology>
        <orientation evidence="2">Periplasmic side</orientation>
    </subcellularLocation>
    <text evidence="2">Secreted as a signal-anchored, membrane-tethered, inactive endolysin which is subsequently refolded, activated and released by membrane depolarization driven by the pinholin.</text>
</comment>
<comment type="domain">
    <text evidence="2">The signal-anchor, which may also be an uncleaved signal sequence tethers the SAR-endolysin to the membrane until the latter is depolarized by the holin, resulting in the escape of SAR-endolysin from the membrane.</text>
</comment>
<comment type="similarity">
    <text evidence="2">Belongs to the glycosyl hydrolase 24 family.</text>
</comment>
<protein>
    <recommendedName>
        <fullName evidence="2">SAR-endolysin</fullName>
        <ecNumber evidence="2">3.2.1.17</ecNumber>
    </recommendedName>
    <alternativeName>
        <fullName evidence="2">Endolysin</fullName>
    </alternativeName>
    <alternativeName>
        <fullName evidence="2">Lysis protein</fullName>
    </alternativeName>
    <alternativeName>
        <fullName evidence="2">Lysozyme</fullName>
    </alternativeName>
    <alternativeName>
        <fullName evidence="2">Muramidase</fullName>
    </alternativeName>
</protein>
<organismHost>
    <name type="scientific">Escherichia coli</name>
    <dbReference type="NCBI Taxonomy" id="562"/>
</organismHost>
<keyword id="KW-0929">Antimicrobial</keyword>
<keyword id="KW-0081">Bacteriolytic enzyme</keyword>
<keyword id="KW-0204">Cytolysis</keyword>
<keyword id="KW-0326">Glycosidase</keyword>
<keyword id="KW-1030">Host cell inner membrane</keyword>
<keyword id="KW-0578">Host cell lysis by virus</keyword>
<keyword id="KW-1032">Host cell membrane</keyword>
<keyword id="KW-1043">Host membrane</keyword>
<keyword id="KW-0378">Hydrolase</keyword>
<keyword id="KW-0472">Membrane</keyword>
<keyword id="KW-0735">Signal-anchor</keyword>
<keyword id="KW-0812">Transmembrane</keyword>
<keyword id="KW-1133">Transmembrane helix</keyword>
<keyword id="KW-1188">Viral release from host cell</keyword>
<gene>
    <name type="primary">R</name>
</gene>
<feature type="chain" id="PRO_0000218093" description="SAR-endolysin">
    <location>
        <begin position="1"/>
        <end position="177"/>
    </location>
</feature>
<feature type="transmembrane region" description="Helical; Signal-anchor for type II membrane protein" evidence="1">
    <location>
        <begin position="1"/>
        <end position="24"/>
    </location>
</feature>
<feature type="active site" description="Proton donor/acceptor" evidence="2">
    <location>
        <position position="35"/>
    </location>
</feature>
<feature type="active site" description="Proton donor/acceptor" evidence="2">
    <location>
        <position position="44"/>
    </location>
</feature>
<dbReference type="EC" id="3.2.1.17" evidence="2"/>
<dbReference type="EMBL" id="AF034975">
    <property type="protein sequence ID" value="AAD17382.1"/>
    <property type="molecule type" value="Genomic_DNA"/>
</dbReference>
<dbReference type="SMR" id="Q9ZXB7"/>
<dbReference type="CAZy" id="GH24">
    <property type="family name" value="Glycoside Hydrolase Family 24"/>
</dbReference>
<dbReference type="GO" id="GO:0020002">
    <property type="term" value="C:host cell plasma membrane"/>
    <property type="evidence" value="ECO:0007669"/>
    <property type="project" value="UniProtKB-SubCell"/>
</dbReference>
<dbReference type="GO" id="GO:0016020">
    <property type="term" value="C:membrane"/>
    <property type="evidence" value="ECO:0007669"/>
    <property type="project" value="UniProtKB-KW"/>
</dbReference>
<dbReference type="GO" id="GO:0003796">
    <property type="term" value="F:lysozyme activity"/>
    <property type="evidence" value="ECO:0007669"/>
    <property type="project" value="UniProtKB-EC"/>
</dbReference>
<dbReference type="GO" id="GO:0016998">
    <property type="term" value="P:cell wall macromolecule catabolic process"/>
    <property type="evidence" value="ECO:0007669"/>
    <property type="project" value="InterPro"/>
</dbReference>
<dbReference type="GO" id="GO:0042742">
    <property type="term" value="P:defense response to bacterium"/>
    <property type="evidence" value="ECO:0007669"/>
    <property type="project" value="UniProtKB-KW"/>
</dbReference>
<dbReference type="GO" id="GO:0031640">
    <property type="term" value="P:killing of cells of another organism"/>
    <property type="evidence" value="ECO:0007669"/>
    <property type="project" value="UniProtKB-KW"/>
</dbReference>
<dbReference type="GO" id="GO:0009253">
    <property type="term" value="P:peptidoglycan catabolic process"/>
    <property type="evidence" value="ECO:0007669"/>
    <property type="project" value="InterPro"/>
</dbReference>
<dbReference type="CDD" id="cd16900">
    <property type="entry name" value="endolysin_R21-like"/>
    <property type="match status" value="1"/>
</dbReference>
<dbReference type="Gene3D" id="1.10.530.40">
    <property type="match status" value="1"/>
</dbReference>
<dbReference type="HAMAP" id="MF_04110">
    <property type="entry name" value="ENDOLYSIN_T4"/>
    <property type="match status" value="1"/>
</dbReference>
<dbReference type="HAMAP" id="MF_04136">
    <property type="entry name" value="SAR_ENDOLYSIN"/>
    <property type="match status" value="1"/>
</dbReference>
<dbReference type="InterPro" id="IPR051018">
    <property type="entry name" value="Bacteriophage_GH24"/>
</dbReference>
<dbReference type="InterPro" id="IPR034690">
    <property type="entry name" value="Endolysin_T4_type"/>
</dbReference>
<dbReference type="InterPro" id="IPR002196">
    <property type="entry name" value="Glyco_hydro_24"/>
</dbReference>
<dbReference type="InterPro" id="IPR023346">
    <property type="entry name" value="Lysozyme-like_dom_sf"/>
</dbReference>
<dbReference type="InterPro" id="IPR023347">
    <property type="entry name" value="Lysozyme_dom_sf"/>
</dbReference>
<dbReference type="InterPro" id="IPR043688">
    <property type="entry name" value="SAR_endolysin-like"/>
</dbReference>
<dbReference type="PANTHER" id="PTHR38107">
    <property type="match status" value="1"/>
</dbReference>
<dbReference type="PANTHER" id="PTHR38107:SF3">
    <property type="entry name" value="LYSOZYME RRRD-RELATED"/>
    <property type="match status" value="1"/>
</dbReference>
<dbReference type="Pfam" id="PF00959">
    <property type="entry name" value="Phage_lysozyme"/>
    <property type="match status" value="1"/>
</dbReference>
<dbReference type="SUPFAM" id="SSF53955">
    <property type="entry name" value="Lysozyme-like"/>
    <property type="match status" value="1"/>
</dbReference>